<comment type="function">
    <text evidence="1">Major role in the synthesis of nucleoside triphosphates other than ATP. The ATP gamma phosphate is transferred to the NDP beta phosphate via a ping-pong mechanism, using a phosphorylated active-site intermediate.</text>
</comment>
<comment type="catalytic activity">
    <reaction evidence="1">
        <text>a 2'-deoxyribonucleoside 5'-diphosphate + ATP = a 2'-deoxyribonucleoside 5'-triphosphate + ADP</text>
        <dbReference type="Rhea" id="RHEA:44640"/>
        <dbReference type="ChEBI" id="CHEBI:30616"/>
        <dbReference type="ChEBI" id="CHEBI:61560"/>
        <dbReference type="ChEBI" id="CHEBI:73316"/>
        <dbReference type="ChEBI" id="CHEBI:456216"/>
        <dbReference type="EC" id="2.7.4.6"/>
    </reaction>
</comment>
<comment type="catalytic activity">
    <reaction evidence="1">
        <text>a ribonucleoside 5'-diphosphate + ATP = a ribonucleoside 5'-triphosphate + ADP</text>
        <dbReference type="Rhea" id="RHEA:18113"/>
        <dbReference type="ChEBI" id="CHEBI:30616"/>
        <dbReference type="ChEBI" id="CHEBI:57930"/>
        <dbReference type="ChEBI" id="CHEBI:61557"/>
        <dbReference type="ChEBI" id="CHEBI:456216"/>
        <dbReference type="EC" id="2.7.4.6"/>
    </reaction>
</comment>
<comment type="cofactor">
    <cofactor evidence="1">
        <name>Mg(2+)</name>
        <dbReference type="ChEBI" id="CHEBI:18420"/>
    </cofactor>
</comment>
<comment type="subunit">
    <text evidence="1">Homotetramer.</text>
</comment>
<comment type="subcellular location">
    <subcellularLocation>
        <location evidence="1">Cytoplasm</location>
    </subcellularLocation>
</comment>
<comment type="similarity">
    <text evidence="1">Belongs to the NDK family.</text>
</comment>
<organism>
    <name type="scientific">Xanthomonas campestris pv. campestris (strain B100)</name>
    <dbReference type="NCBI Taxonomy" id="509169"/>
    <lineage>
        <taxon>Bacteria</taxon>
        <taxon>Pseudomonadati</taxon>
        <taxon>Pseudomonadota</taxon>
        <taxon>Gammaproteobacteria</taxon>
        <taxon>Lysobacterales</taxon>
        <taxon>Lysobacteraceae</taxon>
        <taxon>Xanthomonas</taxon>
    </lineage>
</organism>
<feature type="chain" id="PRO_1000125030" description="Nucleoside diphosphate kinase">
    <location>
        <begin position="1"/>
        <end position="141"/>
    </location>
</feature>
<feature type="active site" description="Pros-phosphohistidine intermediate" evidence="1">
    <location>
        <position position="117"/>
    </location>
</feature>
<feature type="binding site" evidence="1">
    <location>
        <position position="11"/>
    </location>
    <ligand>
        <name>ATP</name>
        <dbReference type="ChEBI" id="CHEBI:30616"/>
    </ligand>
</feature>
<feature type="binding site" evidence="1">
    <location>
        <position position="59"/>
    </location>
    <ligand>
        <name>ATP</name>
        <dbReference type="ChEBI" id="CHEBI:30616"/>
    </ligand>
</feature>
<feature type="binding site" evidence="1">
    <location>
        <position position="87"/>
    </location>
    <ligand>
        <name>ATP</name>
        <dbReference type="ChEBI" id="CHEBI:30616"/>
    </ligand>
</feature>
<feature type="binding site" evidence="1">
    <location>
        <position position="93"/>
    </location>
    <ligand>
        <name>ATP</name>
        <dbReference type="ChEBI" id="CHEBI:30616"/>
    </ligand>
</feature>
<feature type="binding site" evidence="1">
    <location>
        <position position="104"/>
    </location>
    <ligand>
        <name>ATP</name>
        <dbReference type="ChEBI" id="CHEBI:30616"/>
    </ligand>
</feature>
<feature type="binding site" evidence="1">
    <location>
        <position position="114"/>
    </location>
    <ligand>
        <name>ATP</name>
        <dbReference type="ChEBI" id="CHEBI:30616"/>
    </ligand>
</feature>
<dbReference type="EC" id="2.7.4.6" evidence="1"/>
<dbReference type="EMBL" id="AM920689">
    <property type="protein sequence ID" value="CAP51635.1"/>
    <property type="molecule type" value="Genomic_DNA"/>
</dbReference>
<dbReference type="SMR" id="B0RT49"/>
<dbReference type="KEGG" id="xca:xcc-b100_2280"/>
<dbReference type="HOGENOM" id="CLU_060216_8_1_6"/>
<dbReference type="Proteomes" id="UP000001188">
    <property type="component" value="Chromosome"/>
</dbReference>
<dbReference type="GO" id="GO:0005737">
    <property type="term" value="C:cytoplasm"/>
    <property type="evidence" value="ECO:0007669"/>
    <property type="project" value="UniProtKB-SubCell"/>
</dbReference>
<dbReference type="GO" id="GO:0005524">
    <property type="term" value="F:ATP binding"/>
    <property type="evidence" value="ECO:0007669"/>
    <property type="project" value="UniProtKB-UniRule"/>
</dbReference>
<dbReference type="GO" id="GO:0046872">
    <property type="term" value="F:metal ion binding"/>
    <property type="evidence" value="ECO:0007669"/>
    <property type="project" value="UniProtKB-KW"/>
</dbReference>
<dbReference type="GO" id="GO:0004550">
    <property type="term" value="F:nucleoside diphosphate kinase activity"/>
    <property type="evidence" value="ECO:0007669"/>
    <property type="project" value="UniProtKB-UniRule"/>
</dbReference>
<dbReference type="GO" id="GO:0006241">
    <property type="term" value="P:CTP biosynthetic process"/>
    <property type="evidence" value="ECO:0007669"/>
    <property type="project" value="UniProtKB-UniRule"/>
</dbReference>
<dbReference type="GO" id="GO:0006183">
    <property type="term" value="P:GTP biosynthetic process"/>
    <property type="evidence" value="ECO:0007669"/>
    <property type="project" value="UniProtKB-UniRule"/>
</dbReference>
<dbReference type="GO" id="GO:0006228">
    <property type="term" value="P:UTP biosynthetic process"/>
    <property type="evidence" value="ECO:0007669"/>
    <property type="project" value="UniProtKB-UniRule"/>
</dbReference>
<dbReference type="CDD" id="cd04413">
    <property type="entry name" value="NDPk_I"/>
    <property type="match status" value="1"/>
</dbReference>
<dbReference type="FunFam" id="3.30.70.141:FF:000001">
    <property type="entry name" value="Nucleoside diphosphate kinase"/>
    <property type="match status" value="1"/>
</dbReference>
<dbReference type="Gene3D" id="3.30.70.141">
    <property type="entry name" value="Nucleoside diphosphate kinase-like domain"/>
    <property type="match status" value="1"/>
</dbReference>
<dbReference type="HAMAP" id="MF_00451">
    <property type="entry name" value="NDP_kinase"/>
    <property type="match status" value="1"/>
</dbReference>
<dbReference type="InterPro" id="IPR034907">
    <property type="entry name" value="NDK-like_dom"/>
</dbReference>
<dbReference type="InterPro" id="IPR036850">
    <property type="entry name" value="NDK-like_dom_sf"/>
</dbReference>
<dbReference type="InterPro" id="IPR001564">
    <property type="entry name" value="Nucleoside_diP_kinase"/>
</dbReference>
<dbReference type="InterPro" id="IPR023005">
    <property type="entry name" value="Nucleoside_diP_kinase_AS"/>
</dbReference>
<dbReference type="NCBIfam" id="NF001908">
    <property type="entry name" value="PRK00668.1"/>
    <property type="match status" value="1"/>
</dbReference>
<dbReference type="PANTHER" id="PTHR11349">
    <property type="entry name" value="NUCLEOSIDE DIPHOSPHATE KINASE"/>
    <property type="match status" value="1"/>
</dbReference>
<dbReference type="Pfam" id="PF00334">
    <property type="entry name" value="NDK"/>
    <property type="match status" value="1"/>
</dbReference>
<dbReference type="PRINTS" id="PR01243">
    <property type="entry name" value="NUCDPKINASE"/>
</dbReference>
<dbReference type="SMART" id="SM00562">
    <property type="entry name" value="NDK"/>
    <property type="match status" value="1"/>
</dbReference>
<dbReference type="SUPFAM" id="SSF54919">
    <property type="entry name" value="Nucleoside diphosphate kinase, NDK"/>
    <property type="match status" value="1"/>
</dbReference>
<dbReference type="PROSITE" id="PS00469">
    <property type="entry name" value="NDPK"/>
    <property type="match status" value="1"/>
</dbReference>
<dbReference type="PROSITE" id="PS51374">
    <property type="entry name" value="NDPK_LIKE"/>
    <property type="match status" value="1"/>
</dbReference>
<keyword id="KW-0067">ATP-binding</keyword>
<keyword id="KW-0963">Cytoplasm</keyword>
<keyword id="KW-0418">Kinase</keyword>
<keyword id="KW-0460">Magnesium</keyword>
<keyword id="KW-0479">Metal-binding</keyword>
<keyword id="KW-0546">Nucleotide metabolism</keyword>
<keyword id="KW-0547">Nucleotide-binding</keyword>
<keyword id="KW-0597">Phosphoprotein</keyword>
<keyword id="KW-0808">Transferase</keyword>
<protein>
    <recommendedName>
        <fullName evidence="1">Nucleoside diphosphate kinase</fullName>
        <shortName evidence="1">NDK</shortName>
        <shortName evidence="1">NDP kinase</shortName>
        <ecNumber evidence="1">2.7.4.6</ecNumber>
    </recommendedName>
    <alternativeName>
        <fullName evidence="1">Nucleoside-2-P kinase</fullName>
    </alternativeName>
</protein>
<reference key="1">
    <citation type="journal article" date="2008" name="J. Biotechnol.">
        <title>The genome of Xanthomonas campestris pv. campestris B100 and its use for the reconstruction of metabolic pathways involved in xanthan biosynthesis.</title>
        <authorList>
            <person name="Vorhoelter F.-J."/>
            <person name="Schneiker S."/>
            <person name="Goesmann A."/>
            <person name="Krause L."/>
            <person name="Bekel T."/>
            <person name="Kaiser O."/>
            <person name="Linke B."/>
            <person name="Patschkowski T."/>
            <person name="Rueckert C."/>
            <person name="Schmid J."/>
            <person name="Sidhu V.K."/>
            <person name="Sieber V."/>
            <person name="Tauch A."/>
            <person name="Watt S.A."/>
            <person name="Weisshaar B."/>
            <person name="Becker A."/>
            <person name="Niehaus K."/>
            <person name="Puehler A."/>
        </authorList>
    </citation>
    <scope>NUCLEOTIDE SEQUENCE [LARGE SCALE GENOMIC DNA]</scope>
    <source>
        <strain>B100</strain>
    </source>
</reference>
<evidence type="ECO:0000255" key="1">
    <source>
        <dbReference type="HAMAP-Rule" id="MF_00451"/>
    </source>
</evidence>
<gene>
    <name evidence="1" type="primary">ndk</name>
    <name type="ordered locus">xcc-b100_2280</name>
</gene>
<accession>B0RT49</accession>
<name>NDK_XANCB</name>
<proteinExistence type="inferred from homology"/>
<sequence length="141" mass="15257">MALERTLSIIKPDAVAKNVIGEIYSRFEKAGLKVVAAKYKQLSRREAEGFYAVHRERPFFNALVEFMISGPVMIQALEGENAVAAHRDLLGATNPKDAAPGTIRADFADSIDANAAHGSDSVENAANEVAYFFAATEVVSR</sequence>